<proteinExistence type="inferred from homology"/>
<gene>
    <name type="primary">RHO</name>
</gene>
<dbReference type="EMBL" id="AF003546">
    <property type="protein sequence ID" value="AAB97668.1"/>
    <property type="molecule type" value="Genomic_DNA"/>
</dbReference>
<dbReference type="SMR" id="O16020"/>
<dbReference type="GlyCosmos" id="O16020">
    <property type="glycosylation" value="1 site, No reported glycans"/>
</dbReference>
<dbReference type="GO" id="GO:0042995">
    <property type="term" value="C:cell projection"/>
    <property type="evidence" value="ECO:0007669"/>
    <property type="project" value="UniProtKB-KW"/>
</dbReference>
<dbReference type="GO" id="GO:0005886">
    <property type="term" value="C:plasma membrane"/>
    <property type="evidence" value="ECO:0000250"/>
    <property type="project" value="UniProtKB"/>
</dbReference>
<dbReference type="GO" id="GO:0004930">
    <property type="term" value="F:G protein-coupled receptor activity"/>
    <property type="evidence" value="ECO:0007669"/>
    <property type="project" value="UniProtKB-KW"/>
</dbReference>
<dbReference type="GO" id="GO:0009881">
    <property type="term" value="F:photoreceptor activity"/>
    <property type="evidence" value="ECO:0007669"/>
    <property type="project" value="UniProtKB-KW"/>
</dbReference>
<dbReference type="GO" id="GO:0007602">
    <property type="term" value="P:phototransduction"/>
    <property type="evidence" value="ECO:0007669"/>
    <property type="project" value="UniProtKB-KW"/>
</dbReference>
<dbReference type="GO" id="GO:0007601">
    <property type="term" value="P:visual perception"/>
    <property type="evidence" value="ECO:0007669"/>
    <property type="project" value="UniProtKB-KW"/>
</dbReference>
<dbReference type="CDD" id="cd15079">
    <property type="entry name" value="7tmA_photoreceptors_insect"/>
    <property type="match status" value="1"/>
</dbReference>
<dbReference type="FunFam" id="1.20.1070.10:FF:000044">
    <property type="entry name" value="Opsin, ultraviolet-sensitive"/>
    <property type="match status" value="1"/>
</dbReference>
<dbReference type="Gene3D" id="1.20.1070.10">
    <property type="entry name" value="Rhodopsin 7-helix transmembrane proteins"/>
    <property type="match status" value="1"/>
</dbReference>
<dbReference type="InterPro" id="IPR050125">
    <property type="entry name" value="GPCR_opsins"/>
</dbReference>
<dbReference type="InterPro" id="IPR000276">
    <property type="entry name" value="GPCR_Rhodpsn"/>
</dbReference>
<dbReference type="InterPro" id="IPR017452">
    <property type="entry name" value="GPCR_Rhodpsn_7TM"/>
</dbReference>
<dbReference type="InterPro" id="IPR001760">
    <property type="entry name" value="Opsin"/>
</dbReference>
<dbReference type="InterPro" id="IPR001391">
    <property type="entry name" value="Opsin_lateye"/>
</dbReference>
<dbReference type="InterPro" id="IPR027430">
    <property type="entry name" value="Retinal_BS"/>
</dbReference>
<dbReference type="PANTHER" id="PTHR24240">
    <property type="entry name" value="OPSIN"/>
    <property type="match status" value="1"/>
</dbReference>
<dbReference type="Pfam" id="PF00001">
    <property type="entry name" value="7tm_1"/>
    <property type="match status" value="1"/>
</dbReference>
<dbReference type="PRINTS" id="PR00237">
    <property type="entry name" value="GPCRRHODOPSN"/>
</dbReference>
<dbReference type="PRINTS" id="PR00238">
    <property type="entry name" value="OPSIN"/>
</dbReference>
<dbReference type="PRINTS" id="PR00578">
    <property type="entry name" value="OPSINLTRLEYE"/>
</dbReference>
<dbReference type="SUPFAM" id="SSF81321">
    <property type="entry name" value="Family A G protein-coupled receptor-like"/>
    <property type="match status" value="1"/>
</dbReference>
<dbReference type="PROSITE" id="PS00237">
    <property type="entry name" value="G_PROTEIN_RECEP_F1_1"/>
    <property type="match status" value="1"/>
</dbReference>
<dbReference type="PROSITE" id="PS50262">
    <property type="entry name" value="G_PROTEIN_RECEP_F1_2"/>
    <property type="match status" value="1"/>
</dbReference>
<dbReference type="PROSITE" id="PS00238">
    <property type="entry name" value="OPSIN"/>
    <property type="match status" value="1"/>
</dbReference>
<accession>O16020</accession>
<keyword id="KW-1003">Cell membrane</keyword>
<keyword id="KW-0966">Cell projection</keyword>
<keyword id="KW-0157">Chromophore</keyword>
<keyword id="KW-1015">Disulfide bond</keyword>
<keyword id="KW-0297">G-protein coupled receptor</keyword>
<keyword id="KW-0325">Glycoprotein</keyword>
<keyword id="KW-0472">Membrane</keyword>
<keyword id="KW-0597">Phosphoprotein</keyword>
<keyword id="KW-0600">Photoreceptor protein</keyword>
<keyword id="KW-0675">Receptor</keyword>
<keyword id="KW-0681">Retinal protein</keyword>
<keyword id="KW-0716">Sensory transduction</keyword>
<keyword id="KW-0807">Transducer</keyword>
<keyword id="KW-0812">Transmembrane</keyword>
<keyword id="KW-1133">Transmembrane helix</keyword>
<keyword id="KW-0844">Vision</keyword>
<evidence type="ECO:0000250" key="1">
    <source>
        <dbReference type="UniProtKB" id="P02699"/>
    </source>
</evidence>
<evidence type="ECO:0000250" key="2">
    <source>
        <dbReference type="UniProtKB" id="P31356"/>
    </source>
</evidence>
<evidence type="ECO:0000250" key="3">
    <source>
        <dbReference type="UniProtKB" id="P35356"/>
    </source>
</evidence>
<evidence type="ECO:0000255" key="4"/>
<evidence type="ECO:0000255" key="5">
    <source>
        <dbReference type="PROSITE-ProRule" id="PRU00521"/>
    </source>
</evidence>
<evidence type="ECO:0000305" key="6"/>
<reference key="1">
    <citation type="journal article" date="1997" name="J. Mol. Evol.">
        <title>The molecular evolution of visual pigments of freshwater crayfishes (Decapoda: Cambaridae).</title>
        <authorList>
            <person name="Crandall K.A."/>
            <person name="Cronin T.W."/>
        </authorList>
    </citation>
    <scope>NUCLEOTIDE SEQUENCE [GENOMIC DNA]</scope>
</reference>
<feature type="chain" id="PRO_0000197744" description="Rhodopsin">
    <location>
        <begin position="1" status="less than"/>
        <end position="301" status="greater than"/>
    </location>
</feature>
<feature type="topological domain" description="Extracellular" evidence="6">
    <location>
        <begin position="1" status="less than"/>
        <end position="18"/>
    </location>
</feature>
<feature type="transmembrane region" description="Helical; Name=1" evidence="1">
    <location>
        <begin position="19"/>
        <end position="43"/>
    </location>
</feature>
<feature type="topological domain" description="Cytoplasmic" evidence="6">
    <location>
        <begin position="44"/>
        <end position="55"/>
    </location>
</feature>
<feature type="transmembrane region" description="Helical; Name=2" evidence="1">
    <location>
        <begin position="56"/>
        <end position="78"/>
    </location>
</feature>
<feature type="topological domain" description="Extracellular" evidence="6">
    <location>
        <begin position="79"/>
        <end position="92"/>
    </location>
</feature>
<feature type="transmembrane region" description="Helical; Name=3" evidence="1">
    <location>
        <begin position="93"/>
        <end position="115"/>
    </location>
</feature>
<feature type="topological domain" description="Cytoplasmic" evidence="6">
    <location>
        <begin position="116"/>
        <end position="134"/>
    </location>
</feature>
<feature type="transmembrane region" description="Helical; Name=4" evidence="1">
    <location>
        <begin position="135"/>
        <end position="155"/>
    </location>
</feature>
<feature type="topological domain" description="Extracellular" evidence="6">
    <location>
        <begin position="156"/>
        <end position="182"/>
    </location>
</feature>
<feature type="transmembrane region" description="Helical; Name=5" evidence="1">
    <location>
        <begin position="183"/>
        <end position="204"/>
    </location>
</feature>
<feature type="topological domain" description="Cytoplasmic" evidence="6">
    <location>
        <begin position="205"/>
        <end position="245"/>
    </location>
</feature>
<feature type="transmembrane region" description="Helical; Name=6" evidence="1">
    <location>
        <begin position="246"/>
        <end position="267"/>
    </location>
</feature>
<feature type="topological domain" description="Extracellular" evidence="6">
    <location>
        <begin position="268"/>
        <end position="278"/>
    </location>
</feature>
<feature type="transmembrane region" description="Helical; Name=7" evidence="1">
    <location>
        <begin position="279"/>
        <end position="300"/>
    </location>
</feature>
<feature type="short sequence motif" description="'Ionic lock' involved in activated form stabilization" evidence="1">
    <location>
        <begin position="116"/>
        <end position="118"/>
    </location>
</feature>
<feature type="modified residue" description="N6-(retinylidene)lysine" evidence="1">
    <location>
        <position position="288"/>
    </location>
</feature>
<feature type="glycosylation site" description="N-linked (GlcNAc...) asparagine" evidence="4">
    <location>
        <position position="165"/>
    </location>
</feature>
<feature type="disulfide bond" evidence="5">
    <location>
        <begin position="92"/>
        <end position="169"/>
    </location>
</feature>
<feature type="non-terminal residue">
    <location>
        <position position="1"/>
    </location>
</feature>
<feature type="non-terminal residue">
    <location>
        <position position="301"/>
    </location>
</feature>
<organism>
    <name type="scientific">Procambarus milleri</name>
    <name type="common">Miami cave crayfish</name>
    <dbReference type="NCBI Taxonomy" id="60967"/>
    <lineage>
        <taxon>Eukaryota</taxon>
        <taxon>Metazoa</taxon>
        <taxon>Ecdysozoa</taxon>
        <taxon>Arthropoda</taxon>
        <taxon>Crustacea</taxon>
        <taxon>Multicrustacea</taxon>
        <taxon>Malacostraca</taxon>
        <taxon>Eumalacostraca</taxon>
        <taxon>Eucarida</taxon>
        <taxon>Decapoda</taxon>
        <taxon>Pleocyemata</taxon>
        <taxon>Astacidea</taxon>
        <taxon>Astacoidea</taxon>
        <taxon>Cambaridae</taxon>
        <taxon>Procambarus</taxon>
    </lineage>
</organism>
<name>OPSD_PROML</name>
<protein>
    <recommendedName>
        <fullName>Rhodopsin</fullName>
    </recommendedName>
</protein>
<sequence>LHMIHLHWYQYPPMNPMMYPLLLIFMLFTGILCLAGNFVTIWVFMNTKSLRTPANLLVVNLAMSDFLMMFTMFPPMMVTCYYHTWTLGPTFCQVYGFLGNLCGCASIWTMVFITFDRYNVIVKGVAGEPLSTKKASLWILIVWVLSLAWCMAPFFGWNRYVPEGNLTGCGTDYLSEDILSRSYLYIYSTWVYFLPLTITIYCYVFIIKAVAAHEKGMRDQAKKMGIKSLRNEEAQKTSAECRLAKIAMTTVALWFIAWTPYLLINWVGMFARSYLSPVYTIWGYVFAKANAVYNPIVYAIS</sequence>
<comment type="function">
    <text evidence="3">Photoreceptor required for image-forming vision at low light intensity. Can use both retinal and 3-dehydroretinal as visual pigment. Light-induced isomerization of 11-cis to all-trans retinal triggers a conformational change that activates signaling via G-proteins. Signaling via GNAQ probably mediates the activation of phospholipase C.</text>
</comment>
<comment type="subunit">
    <text evidence="3">Homodimer. Interacts with GNAQ.</text>
</comment>
<comment type="subcellular location">
    <subcellularLocation>
        <location evidence="3">Cell projection</location>
        <location evidence="3">Rhabdomere membrane</location>
        <topology evidence="2">Multi-pass membrane protein</topology>
    </subcellularLocation>
</comment>
<comment type="PTM">
    <text evidence="1">Contains one covalently linked retinal chromophore.</text>
</comment>
<comment type="similarity">
    <text evidence="5">Belongs to the G-protein coupled receptor 1 family. Opsin subfamily.</text>
</comment>